<name>NADB_SYNY3</name>
<organism>
    <name type="scientific">Synechocystis sp. (strain ATCC 27184 / PCC 6803 / Kazusa)</name>
    <dbReference type="NCBI Taxonomy" id="1111708"/>
    <lineage>
        <taxon>Bacteria</taxon>
        <taxon>Bacillati</taxon>
        <taxon>Cyanobacteriota</taxon>
        <taxon>Cyanophyceae</taxon>
        <taxon>Synechococcales</taxon>
        <taxon>Merismopediaceae</taxon>
        <taxon>Synechocystis</taxon>
    </lineage>
</organism>
<reference key="1">
    <citation type="journal article" date="1996" name="DNA Res.">
        <title>Sequence analysis of the genome of the unicellular cyanobacterium Synechocystis sp. strain PCC6803. II. Sequence determination of the entire genome and assignment of potential protein-coding regions.</title>
        <authorList>
            <person name="Kaneko T."/>
            <person name="Sato S."/>
            <person name="Kotani H."/>
            <person name="Tanaka A."/>
            <person name="Asamizu E."/>
            <person name="Nakamura Y."/>
            <person name="Miyajima N."/>
            <person name="Hirosawa M."/>
            <person name="Sugiura M."/>
            <person name="Sasamoto S."/>
            <person name="Kimura T."/>
            <person name="Hosouchi T."/>
            <person name="Matsuno A."/>
            <person name="Muraki A."/>
            <person name="Nakazaki N."/>
            <person name="Naruo K."/>
            <person name="Okumura S."/>
            <person name="Shimpo S."/>
            <person name="Takeuchi C."/>
            <person name="Wada T."/>
            <person name="Watanabe A."/>
            <person name="Yamada M."/>
            <person name="Yasuda M."/>
            <person name="Tabata S."/>
        </authorList>
    </citation>
    <scope>NUCLEOTIDE SEQUENCE [LARGE SCALE GENOMIC DNA]</scope>
    <source>
        <strain>ATCC 27184 / PCC 6803 / Kazusa</strain>
    </source>
</reference>
<comment type="function">
    <text evidence="1">Catalyzes the oxidation of L-aspartate to iminoaspartate, the first step in the de novo biosynthesis of NAD(+).</text>
</comment>
<comment type="catalytic activity">
    <reaction evidence="1">
        <text>L-aspartate + O2 = iminosuccinate + H2O2</text>
        <dbReference type="Rhea" id="RHEA:25876"/>
        <dbReference type="ChEBI" id="CHEBI:15379"/>
        <dbReference type="ChEBI" id="CHEBI:16240"/>
        <dbReference type="ChEBI" id="CHEBI:29991"/>
        <dbReference type="ChEBI" id="CHEBI:77875"/>
        <dbReference type="EC" id="1.4.3.16"/>
    </reaction>
    <physiologicalReaction direction="left-to-right" evidence="1">
        <dbReference type="Rhea" id="RHEA:25877"/>
    </physiologicalReaction>
</comment>
<comment type="cofactor">
    <cofactor evidence="1">
        <name>FAD</name>
        <dbReference type="ChEBI" id="CHEBI:57692"/>
    </cofactor>
    <text evidence="1">Binds 1 FAD per subunit.</text>
</comment>
<comment type="pathway">
    <text evidence="1">Cofactor biosynthesis; NAD(+) biosynthesis; iminoaspartate from L-aspartate (oxidase route): step 1/1.</text>
</comment>
<comment type="subcellular location">
    <subcellularLocation>
        <location evidence="1">Cytoplasm</location>
    </subcellularLocation>
</comment>
<comment type="similarity">
    <text evidence="2">Belongs to the FAD-dependent oxidoreductase 2 family. NadB subfamily.</text>
</comment>
<proteinExistence type="inferred from homology"/>
<gene>
    <name type="primary">nadB</name>
    <name type="ordered locus">sll0631</name>
</gene>
<protein>
    <recommendedName>
        <fullName evidence="1">L-aspartate oxidase</fullName>
        <shortName evidence="1">LASPO</shortName>
        <ecNumber evidence="1">1.4.3.16</ecNumber>
    </recommendedName>
    <alternativeName>
        <fullName>Quinolinate synthase B</fullName>
    </alternativeName>
</protein>
<keyword id="KW-0963">Cytoplasm</keyword>
<keyword id="KW-0274">FAD</keyword>
<keyword id="KW-0285">Flavoprotein</keyword>
<keyword id="KW-0547">Nucleotide-binding</keyword>
<keyword id="KW-0560">Oxidoreductase</keyword>
<keyword id="KW-0662">Pyridine nucleotide biosynthesis</keyword>
<keyword id="KW-1185">Reference proteome</keyword>
<feature type="chain" id="PRO_0000184402" description="L-aspartate oxidase">
    <location>
        <begin position="1"/>
        <end position="553"/>
    </location>
</feature>
<feature type="active site" description="Proton donor/acceptor" evidence="1">
    <location>
        <position position="275"/>
    </location>
</feature>
<feature type="binding site" evidence="1">
    <location>
        <begin position="13"/>
        <end position="16"/>
    </location>
    <ligand>
        <name>FAD</name>
        <dbReference type="ChEBI" id="CHEBI:57692"/>
    </ligand>
</feature>
<feature type="binding site" evidence="1">
    <location>
        <position position="35"/>
    </location>
    <ligand>
        <name>FAD</name>
        <dbReference type="ChEBI" id="CHEBI:57692"/>
    </ligand>
</feature>
<feature type="binding site" evidence="1">
    <location>
        <begin position="42"/>
        <end position="49"/>
    </location>
    <ligand>
        <name>FAD</name>
        <dbReference type="ChEBI" id="CHEBI:57692"/>
    </ligand>
</feature>
<feature type="binding site" evidence="1">
    <location>
        <position position="208"/>
    </location>
    <ligand>
        <name>FAD</name>
        <dbReference type="ChEBI" id="CHEBI:57692"/>
    </ligand>
</feature>
<feature type="binding site" evidence="1">
    <location>
        <position position="364"/>
    </location>
    <ligand>
        <name>FAD</name>
        <dbReference type="ChEBI" id="CHEBI:57692"/>
    </ligand>
</feature>
<feature type="binding site" evidence="1">
    <location>
        <begin position="380"/>
        <end position="381"/>
    </location>
    <ligand>
        <name>FAD</name>
        <dbReference type="ChEBI" id="CHEBI:57692"/>
    </ligand>
</feature>
<feature type="site" description="Important in orienting the L-aspartate substrate" evidence="1">
    <location>
        <position position="113"/>
    </location>
</feature>
<accession>P74562</accession>
<evidence type="ECO:0000250" key="1">
    <source>
        <dbReference type="UniProtKB" id="P10902"/>
    </source>
</evidence>
<evidence type="ECO:0000305" key="2"/>
<dbReference type="EC" id="1.4.3.16" evidence="1"/>
<dbReference type="EMBL" id="BA000022">
    <property type="protein sequence ID" value="BAA18669.1"/>
    <property type="molecule type" value="Genomic_DNA"/>
</dbReference>
<dbReference type="PIR" id="S76757">
    <property type="entry name" value="S76757"/>
</dbReference>
<dbReference type="SMR" id="P74562"/>
<dbReference type="FunCoup" id="P74562">
    <property type="interactions" value="347"/>
</dbReference>
<dbReference type="IntAct" id="P74562">
    <property type="interactions" value="6"/>
</dbReference>
<dbReference type="STRING" id="1148.gene:10500435"/>
<dbReference type="PaxDb" id="1148-1653758"/>
<dbReference type="EnsemblBacteria" id="BAA18669">
    <property type="protein sequence ID" value="BAA18669"/>
    <property type="gene ID" value="BAA18669"/>
</dbReference>
<dbReference type="KEGG" id="syn:sll0631"/>
<dbReference type="eggNOG" id="COG0029">
    <property type="taxonomic scope" value="Bacteria"/>
</dbReference>
<dbReference type="InParanoid" id="P74562"/>
<dbReference type="PhylomeDB" id="P74562"/>
<dbReference type="UniPathway" id="UPA00253">
    <property type="reaction ID" value="UER00326"/>
</dbReference>
<dbReference type="Proteomes" id="UP000001425">
    <property type="component" value="Chromosome"/>
</dbReference>
<dbReference type="GO" id="GO:0005737">
    <property type="term" value="C:cytoplasm"/>
    <property type="evidence" value="ECO:0007669"/>
    <property type="project" value="UniProtKB-SubCell"/>
</dbReference>
<dbReference type="GO" id="GO:0008734">
    <property type="term" value="F:L-aspartate oxidase activity"/>
    <property type="evidence" value="ECO:0000318"/>
    <property type="project" value="GO_Central"/>
</dbReference>
<dbReference type="GO" id="GO:0000166">
    <property type="term" value="F:nucleotide binding"/>
    <property type="evidence" value="ECO:0007669"/>
    <property type="project" value="UniProtKB-KW"/>
</dbReference>
<dbReference type="GO" id="GO:0033765">
    <property type="term" value="F:steroid dehydrogenase activity, acting on the CH-CH group of donors"/>
    <property type="evidence" value="ECO:0007669"/>
    <property type="project" value="UniProtKB-ARBA"/>
</dbReference>
<dbReference type="GO" id="GO:0034628">
    <property type="term" value="P:'de novo' NAD biosynthetic process from L-aspartate"/>
    <property type="evidence" value="ECO:0000318"/>
    <property type="project" value="GO_Central"/>
</dbReference>
<dbReference type="FunFam" id="3.90.700.10:FF:000002">
    <property type="entry name" value="L-aspartate oxidase"/>
    <property type="match status" value="1"/>
</dbReference>
<dbReference type="Gene3D" id="3.50.50.60">
    <property type="entry name" value="FAD/NAD(P)-binding domain"/>
    <property type="match status" value="1"/>
</dbReference>
<dbReference type="Gene3D" id="1.20.58.100">
    <property type="entry name" value="Fumarate reductase/succinate dehydrogenase flavoprotein-like, C-terminal domain"/>
    <property type="match status" value="1"/>
</dbReference>
<dbReference type="Gene3D" id="3.90.700.10">
    <property type="entry name" value="Succinate dehydrogenase/fumarate reductase flavoprotein, catalytic domain"/>
    <property type="match status" value="1"/>
</dbReference>
<dbReference type="InterPro" id="IPR003953">
    <property type="entry name" value="FAD-dep_OxRdtase_2_FAD-bd"/>
</dbReference>
<dbReference type="InterPro" id="IPR036188">
    <property type="entry name" value="FAD/NAD-bd_sf"/>
</dbReference>
<dbReference type="InterPro" id="IPR037099">
    <property type="entry name" value="Fum_R/Succ_DH_flav-like_C_sf"/>
</dbReference>
<dbReference type="InterPro" id="IPR015939">
    <property type="entry name" value="Fum_Rdtase/Succ_DH_flav-like_C"/>
</dbReference>
<dbReference type="InterPro" id="IPR005288">
    <property type="entry name" value="NadB"/>
</dbReference>
<dbReference type="InterPro" id="IPR027477">
    <property type="entry name" value="Succ_DH/fumarate_Rdtase_cat_sf"/>
</dbReference>
<dbReference type="NCBIfam" id="TIGR00551">
    <property type="entry name" value="nadB"/>
    <property type="match status" value="1"/>
</dbReference>
<dbReference type="NCBIfam" id="NF005636">
    <property type="entry name" value="PRK07395.1"/>
    <property type="match status" value="1"/>
</dbReference>
<dbReference type="PANTHER" id="PTHR42716">
    <property type="entry name" value="L-ASPARTATE OXIDASE"/>
    <property type="match status" value="1"/>
</dbReference>
<dbReference type="PANTHER" id="PTHR42716:SF2">
    <property type="entry name" value="L-ASPARTATE OXIDASE, CHLOROPLASTIC"/>
    <property type="match status" value="1"/>
</dbReference>
<dbReference type="Pfam" id="PF00890">
    <property type="entry name" value="FAD_binding_2"/>
    <property type="match status" value="1"/>
</dbReference>
<dbReference type="Pfam" id="PF02910">
    <property type="entry name" value="Succ_DH_flav_C"/>
    <property type="match status" value="1"/>
</dbReference>
<dbReference type="PRINTS" id="PR00368">
    <property type="entry name" value="FADPNR"/>
</dbReference>
<dbReference type="SUPFAM" id="SSF51905">
    <property type="entry name" value="FAD/NAD(P)-binding domain"/>
    <property type="match status" value="1"/>
</dbReference>
<dbReference type="SUPFAM" id="SSF46977">
    <property type="entry name" value="Succinate dehydrogenase/fumarate reductase flavoprotein C-terminal domain"/>
    <property type="match status" value="1"/>
</dbReference>
<dbReference type="SUPFAM" id="SSF56425">
    <property type="entry name" value="Succinate dehydrogenase/fumarate reductase flavoprotein, catalytic domain"/>
    <property type="match status" value="1"/>
</dbReference>
<sequence>MGANQFDVVVVGSGAAGLYACLCLPGHYRVALVTKAELKTGASDWAQGGIAAAIAPTDSPQSHYEDTLAAGAGLCDGEAVDFLVNHAPQAIAELVQFGVSFDRHGQHLALTLEAAHSQPRVLHAADTTGRAIVSTLMGQVQARPNVEIFSQAIALSLNIEPTTGHCRGIQVFVNQTIETFHSRAVLLATGGGGQVFAQTTNPKVSTGDGIALAWRSGAQVRDLEFFQFHPTALTKPGVPHFLISEAVRGEGAHLLDRQGKRFAFDYHPRGELAPRDVVSRAIFQHLANTEKDPTQATVFLDLSPIEPERIQRRFPNIIRRCLHWGVDIFREPIPVAPAAHYWMGGITTDINCQTTIPGLYALGETASTGVHGANRLASNSLLECIVFASQLRNLSLPPLASSDSNVNQSIKEIRLDTTNDLALLNHWRSELPRLMWQTAGICRQAETLQMAIAKLEQWQEQWQQLSSSKLLAHLPEDQKISLSGPGLNEFMQLWAETHNLLDIAQLILTSALFREESRGGHYRLDCPDTKREWQSHTVIEGTRVFLQPSQSQD</sequence>